<reference key="1">
    <citation type="journal article" date="2003" name="DNA Res.">
        <title>Complete genome structure of Gloeobacter violaceus PCC 7421, a cyanobacterium that lacks thylakoids.</title>
        <authorList>
            <person name="Nakamura Y."/>
            <person name="Kaneko T."/>
            <person name="Sato S."/>
            <person name="Mimuro M."/>
            <person name="Miyashita H."/>
            <person name="Tsuchiya T."/>
            <person name="Sasamoto S."/>
            <person name="Watanabe A."/>
            <person name="Kawashima K."/>
            <person name="Kishida Y."/>
            <person name="Kiyokawa C."/>
            <person name="Kohara M."/>
            <person name="Matsumoto M."/>
            <person name="Matsuno A."/>
            <person name="Nakazaki N."/>
            <person name="Shimpo S."/>
            <person name="Takeuchi C."/>
            <person name="Yamada M."/>
            <person name="Tabata S."/>
        </authorList>
    </citation>
    <scope>NUCLEOTIDE SEQUENCE [LARGE SCALE GENOMIC DNA]</scope>
    <source>
        <strain>ATCC 29082 / PCC 7421</strain>
    </source>
</reference>
<name>YBEY_GLOVI</name>
<organism>
    <name type="scientific">Gloeobacter violaceus (strain ATCC 29082 / PCC 7421)</name>
    <dbReference type="NCBI Taxonomy" id="251221"/>
    <lineage>
        <taxon>Bacteria</taxon>
        <taxon>Bacillati</taxon>
        <taxon>Cyanobacteriota</taxon>
        <taxon>Cyanophyceae</taxon>
        <taxon>Gloeobacterales</taxon>
        <taxon>Gloeobacteraceae</taxon>
        <taxon>Gloeobacter</taxon>
    </lineage>
</organism>
<gene>
    <name evidence="1" type="primary">ybeY</name>
    <name type="ordered locus">gll1243</name>
</gene>
<protein>
    <recommendedName>
        <fullName evidence="1">Endoribonuclease YbeY</fullName>
        <ecNumber evidence="1">3.1.-.-</ecNumber>
    </recommendedName>
</protein>
<evidence type="ECO:0000255" key="1">
    <source>
        <dbReference type="HAMAP-Rule" id="MF_00009"/>
    </source>
</evidence>
<accession>Q7NL83</accession>
<keyword id="KW-0963">Cytoplasm</keyword>
<keyword id="KW-0255">Endonuclease</keyword>
<keyword id="KW-0378">Hydrolase</keyword>
<keyword id="KW-0479">Metal-binding</keyword>
<keyword id="KW-0540">Nuclease</keyword>
<keyword id="KW-1185">Reference proteome</keyword>
<keyword id="KW-0690">Ribosome biogenesis</keyword>
<keyword id="KW-0698">rRNA processing</keyword>
<keyword id="KW-0862">Zinc</keyword>
<proteinExistence type="inferred from homology"/>
<dbReference type="EC" id="3.1.-.-" evidence="1"/>
<dbReference type="EMBL" id="BA000045">
    <property type="protein sequence ID" value="BAC89184.1"/>
    <property type="molecule type" value="Genomic_DNA"/>
</dbReference>
<dbReference type="RefSeq" id="NP_924189.1">
    <property type="nucleotide sequence ID" value="NC_005125.1"/>
</dbReference>
<dbReference type="SMR" id="Q7NL83"/>
<dbReference type="FunCoup" id="Q7NL83">
    <property type="interactions" value="71"/>
</dbReference>
<dbReference type="STRING" id="251221.gene:10758724"/>
<dbReference type="EnsemblBacteria" id="BAC89184">
    <property type="protein sequence ID" value="BAC89184"/>
    <property type="gene ID" value="BAC89184"/>
</dbReference>
<dbReference type="KEGG" id="gvi:gll1243"/>
<dbReference type="PATRIC" id="fig|251221.4.peg.1264"/>
<dbReference type="eggNOG" id="COG0319">
    <property type="taxonomic scope" value="Bacteria"/>
</dbReference>
<dbReference type="HOGENOM" id="CLU_106710_3_1_3"/>
<dbReference type="InParanoid" id="Q7NL83"/>
<dbReference type="OrthoDB" id="9807740at2"/>
<dbReference type="PhylomeDB" id="Q7NL83"/>
<dbReference type="Proteomes" id="UP000000557">
    <property type="component" value="Chromosome"/>
</dbReference>
<dbReference type="GO" id="GO:0005737">
    <property type="term" value="C:cytoplasm"/>
    <property type="evidence" value="ECO:0007669"/>
    <property type="project" value="UniProtKB-SubCell"/>
</dbReference>
<dbReference type="GO" id="GO:0004222">
    <property type="term" value="F:metalloendopeptidase activity"/>
    <property type="evidence" value="ECO:0007669"/>
    <property type="project" value="InterPro"/>
</dbReference>
<dbReference type="GO" id="GO:0004521">
    <property type="term" value="F:RNA endonuclease activity"/>
    <property type="evidence" value="ECO:0007669"/>
    <property type="project" value="UniProtKB-UniRule"/>
</dbReference>
<dbReference type="GO" id="GO:0008270">
    <property type="term" value="F:zinc ion binding"/>
    <property type="evidence" value="ECO:0007669"/>
    <property type="project" value="UniProtKB-UniRule"/>
</dbReference>
<dbReference type="GO" id="GO:0006364">
    <property type="term" value="P:rRNA processing"/>
    <property type="evidence" value="ECO:0007669"/>
    <property type="project" value="UniProtKB-UniRule"/>
</dbReference>
<dbReference type="Gene3D" id="3.40.390.30">
    <property type="entry name" value="Metalloproteases ('zincins'), catalytic domain"/>
    <property type="match status" value="1"/>
</dbReference>
<dbReference type="HAMAP" id="MF_00009">
    <property type="entry name" value="Endoribonucl_YbeY"/>
    <property type="match status" value="1"/>
</dbReference>
<dbReference type="InterPro" id="IPR023091">
    <property type="entry name" value="MetalPrtase_cat_dom_sf_prd"/>
</dbReference>
<dbReference type="InterPro" id="IPR002036">
    <property type="entry name" value="YbeY"/>
</dbReference>
<dbReference type="InterPro" id="IPR020549">
    <property type="entry name" value="YbeY_CS"/>
</dbReference>
<dbReference type="NCBIfam" id="TIGR00043">
    <property type="entry name" value="rRNA maturation RNase YbeY"/>
    <property type="match status" value="1"/>
</dbReference>
<dbReference type="PANTHER" id="PTHR46986">
    <property type="entry name" value="ENDORIBONUCLEASE YBEY, CHLOROPLASTIC"/>
    <property type="match status" value="1"/>
</dbReference>
<dbReference type="PANTHER" id="PTHR46986:SF1">
    <property type="entry name" value="ENDORIBONUCLEASE YBEY, CHLOROPLASTIC"/>
    <property type="match status" value="1"/>
</dbReference>
<dbReference type="Pfam" id="PF02130">
    <property type="entry name" value="YbeY"/>
    <property type="match status" value="1"/>
</dbReference>
<dbReference type="SUPFAM" id="SSF55486">
    <property type="entry name" value="Metalloproteases ('zincins'), catalytic domain"/>
    <property type="match status" value="1"/>
</dbReference>
<dbReference type="PROSITE" id="PS01306">
    <property type="entry name" value="UPF0054"/>
    <property type="match status" value="1"/>
</dbReference>
<comment type="function">
    <text evidence="1">Single strand-specific metallo-endoribonuclease involved in late-stage 70S ribosome quality control and in maturation of the 3' terminus of the 16S rRNA.</text>
</comment>
<comment type="cofactor">
    <cofactor evidence="1">
        <name>Zn(2+)</name>
        <dbReference type="ChEBI" id="CHEBI:29105"/>
    </cofactor>
    <text evidence="1">Binds 1 zinc ion.</text>
</comment>
<comment type="subcellular location">
    <subcellularLocation>
        <location evidence="1">Cytoplasm</location>
    </subcellularLocation>
</comment>
<comment type="similarity">
    <text evidence="1">Belongs to the endoribonuclease YbeY family.</text>
</comment>
<feature type="chain" id="PRO_0000102461" description="Endoribonuclease YbeY">
    <location>
        <begin position="1"/>
        <end position="194"/>
    </location>
</feature>
<feature type="binding site" evidence="1">
    <location>
        <position position="151"/>
    </location>
    <ligand>
        <name>Zn(2+)</name>
        <dbReference type="ChEBI" id="CHEBI:29105"/>
        <note>catalytic</note>
    </ligand>
</feature>
<feature type="binding site" evidence="1">
    <location>
        <position position="155"/>
    </location>
    <ligand>
        <name>Zn(2+)</name>
        <dbReference type="ChEBI" id="CHEBI:29105"/>
        <note>catalytic</note>
    </ligand>
</feature>
<feature type="binding site" evidence="1">
    <location>
        <position position="161"/>
    </location>
    <ligand>
        <name>Zn(2+)</name>
        <dbReference type="ChEBI" id="CHEBI:29105"/>
        <note>catalytic</note>
    </ligand>
</feature>
<sequence>MARAYRLGEDLGTGAKCVKFLINLASTPSMAVVPTAVELCIQAAVDDPVGEARWQSWFDQWLLELQSAGAVELTLRLTDDAEIRRLNARFRGVDAPTDVLSFEFEADDTQALIAEEPLYLGDIVVSVPTATRQAREFGHTLEVELAWLAVHGLLHLLGWDHPDEQSWRAMVTQQARLLKGVNVVYDWPSVYPVG</sequence>